<sequence length="221" mass="25127">MLTDLRLYQLISPSLPVGAFTYSQGLEWAIEKGWVKDEQSLALWLTSQMQGSLATLEIPILIQLHHLLGVQNYEKAQYWCDFIVASRETKELRIEERQRGAAFAKLLPQLGIDLSERTFPLVNQTQVAAFALAAEKWEIPLVKLCSAYMWSWLENAVMAGVKLIPLGQTAGQKLLIDLTKFVPEVIEKSMRWPCDRIGSFTPAQVIASCQHETQYTRLFRS</sequence>
<protein>
    <recommendedName>
        <fullName evidence="1">Urease accessory protein UreF</fullName>
    </recommendedName>
</protein>
<name>UREF_VIBPH</name>
<feature type="chain" id="PRO_0000344201" description="Urease accessory protein UreF">
    <location>
        <begin position="1"/>
        <end position="221"/>
    </location>
</feature>
<keyword id="KW-0143">Chaperone</keyword>
<keyword id="KW-0963">Cytoplasm</keyword>
<keyword id="KW-0996">Nickel insertion</keyword>
<gene>
    <name evidence="1" type="primary">ureF</name>
</gene>
<organism>
    <name type="scientific">Vibrio parahaemolyticus</name>
    <dbReference type="NCBI Taxonomy" id="670"/>
    <lineage>
        <taxon>Bacteria</taxon>
        <taxon>Pseudomonadati</taxon>
        <taxon>Pseudomonadota</taxon>
        <taxon>Gammaproteobacteria</taxon>
        <taxon>Vibrionales</taxon>
        <taxon>Vibrionaceae</taxon>
        <taxon>Vibrio</taxon>
    </lineage>
</organism>
<comment type="function">
    <text evidence="1">Required for maturation of urease via the functional incorporation of the urease nickel metallocenter.</text>
</comment>
<comment type="subunit">
    <text evidence="1">UreD, UreF and UreG form a complex that acts as a GTP-hydrolysis-dependent molecular chaperone, activating the urease apoprotein by helping to assemble the nickel containing metallocenter of UreC. The UreE protein probably delivers the nickel.</text>
</comment>
<comment type="subcellular location">
    <subcellularLocation>
        <location evidence="1">Cytoplasm</location>
    </subcellularLocation>
</comment>
<comment type="similarity">
    <text evidence="1">Belongs to the UreF family.</text>
</comment>
<proteinExistence type="inferred from homology"/>
<accession>Q9FAS3</accession>
<reference key="1">
    <citation type="journal article" date="2000" name="Infect. Immun.">
        <title>Genetic characterization of DNA region containing the trh and ure genes of Vibrio parahaemolyticus.</title>
        <authorList>
            <person name="Park K.-S."/>
            <person name="Iida T."/>
            <person name="Yamaichi Y."/>
            <person name="Oyagi T."/>
            <person name="Yamamoto K."/>
            <person name="Honda T."/>
        </authorList>
    </citation>
    <scope>NUCLEOTIDE SEQUENCE [GENOMIC DNA]</scope>
    <source>
        <strain>TH3996</strain>
    </source>
</reference>
<reference key="2">
    <citation type="journal article" date="2009" name="Infect. Immun.">
        <title>Identification and characterization of a novel type III secretion system in trh-positive Vibrio parahaemolyticus strain TH3996 reveal genetic lineage and diversity of pathogenic machinery beyond the species level.</title>
        <authorList>
            <person name="Okada N."/>
            <person name="Iida T."/>
            <person name="Park K.-S."/>
            <person name="Goto N."/>
            <person name="Yasunaga T."/>
            <person name="Hiyoshi H."/>
            <person name="Matsuda S."/>
            <person name="Kodama T."/>
            <person name="Honda T."/>
        </authorList>
    </citation>
    <scope>NUCLEOTIDE SEQUENCE [GENOMIC DNA]</scope>
    <scope>SEQUENCE REVISION TO 145</scope>
    <source>
        <strain>TH3996</strain>
    </source>
</reference>
<evidence type="ECO:0000255" key="1">
    <source>
        <dbReference type="HAMAP-Rule" id="MF_01385"/>
    </source>
</evidence>
<dbReference type="EMBL" id="AB455531">
    <property type="protein sequence ID" value="BAB13790.2"/>
    <property type="molecule type" value="Genomic_DNA"/>
</dbReference>
<dbReference type="RefSeq" id="WP_353569435.1">
    <property type="nucleotide sequence ID" value="NZ_OX328359.1"/>
</dbReference>
<dbReference type="SMR" id="Q9FAS3"/>
<dbReference type="GO" id="GO:0005737">
    <property type="term" value="C:cytoplasm"/>
    <property type="evidence" value="ECO:0007669"/>
    <property type="project" value="UniProtKB-SubCell"/>
</dbReference>
<dbReference type="GO" id="GO:0016151">
    <property type="term" value="F:nickel cation binding"/>
    <property type="evidence" value="ECO:0007669"/>
    <property type="project" value="UniProtKB-UniRule"/>
</dbReference>
<dbReference type="Gene3D" id="1.10.4190.10">
    <property type="entry name" value="Urease accessory protein UreF"/>
    <property type="match status" value="1"/>
</dbReference>
<dbReference type="HAMAP" id="MF_01385">
    <property type="entry name" value="UreF"/>
    <property type="match status" value="1"/>
</dbReference>
<dbReference type="InterPro" id="IPR002639">
    <property type="entry name" value="UreF"/>
</dbReference>
<dbReference type="InterPro" id="IPR038277">
    <property type="entry name" value="UreF_sf"/>
</dbReference>
<dbReference type="PANTHER" id="PTHR33620">
    <property type="entry name" value="UREASE ACCESSORY PROTEIN F"/>
    <property type="match status" value="1"/>
</dbReference>
<dbReference type="PANTHER" id="PTHR33620:SF1">
    <property type="entry name" value="UREASE ACCESSORY PROTEIN F"/>
    <property type="match status" value="1"/>
</dbReference>
<dbReference type="Pfam" id="PF01730">
    <property type="entry name" value="UreF"/>
    <property type="match status" value="1"/>
</dbReference>
<dbReference type="PIRSF" id="PIRSF009467">
    <property type="entry name" value="Ureas_acces_UreF"/>
    <property type="match status" value="1"/>
</dbReference>